<keyword id="KW-0030">Aminoacyl-tRNA synthetase</keyword>
<keyword id="KW-0067">ATP-binding</keyword>
<keyword id="KW-0963">Cytoplasm</keyword>
<keyword id="KW-0436">Ligase</keyword>
<keyword id="KW-0479">Metal-binding</keyword>
<keyword id="KW-0547">Nucleotide-binding</keyword>
<keyword id="KW-0648">Protein biosynthesis</keyword>
<keyword id="KW-1185">Reference proteome</keyword>
<keyword id="KW-0694">RNA-binding</keyword>
<keyword id="KW-0820">tRNA-binding</keyword>
<keyword id="KW-0862">Zinc</keyword>
<sequence length="891" mass="100952">MQMTTFLNINQIRTTFIEFFKKYGHHYASSSSLVPGNDPSLFFVNAGIVQFKDYVRAPETSKYSRVVTCQKCVRAGGKHNDLESVGYTARHHTFFEMLGNFSFGEDNAKADFMQLIWSFLTKELFIDEDRLIVTVYHTDHETAKLWRSIAGLDDSRIIRIKTDDNFWSMGPVGPCGPCTEIFYDHGDKIPGGLPGTKDENGGRYVEIWNIVFMQYEQLNESTRVELAKRCIDTGAGLERIATVLQGVYDNYDIDLFKNLIANIEHLTKIKSVGEANFSHRIIADHLRASAFLIADGVMPSNDGRGYVLRRIMRRAMNQIHQLGCKEPVMHQLVPGLINEMGDFYKELRIRQELITYLLRNEEEKFKTTLSKGLKLLEEESKNLTSGSQLSGHIAFKLYDTYGFPFDLTQDILKKRSISINKTEFDQNMLEQQNRARQLWKGQGSNKEQLLLEKLKEEFRATEFVGYSLYQAEGIVISLIQDNQYVEYIDINQVDDNNKEFWLITNQTPFYGQSGGQMGDIGIIKNNECTIHVTDTIKLFGCTHVHICKIVSGKININAVVHMAIDKQYRTQLQIHHSATHILHAALREILGNHIIQKGSLVAYDYLRFDVSHPTSISREILTKIENRVNEIILNNTAVKLMIMPFDQAIAHGAVALFEEKYGDEVRAISIGETSDARYYSFELCGGTHVKYTGDIGAFRILSESAIAAGVRRVEAIAGKHVIKQARRNSELLDLIAEKFSVTKQTIMSKIDGIIEENNLLKKQLHQLKYNQLILCEKDIQNIADDIGTIKLVYKNIEDYDLQIVRKAVSNTTKNIKNLVMVVISNNDKKNTIIIGVSDNITNKIQANNLVKEIINYLGGSGGGSATLAQIGCQYTCKLLDLKNIICKLLAT</sequence>
<name>SYA_ORITB</name>
<reference key="1">
    <citation type="journal article" date="2007" name="Proc. Natl. Acad. Sci. U.S.A.">
        <title>The Orientia tsutsugamushi genome reveals massive proliferation of conjugative type IV secretion system and host-cell interaction genes.</title>
        <authorList>
            <person name="Cho N.-H."/>
            <person name="Kim H.-R."/>
            <person name="Lee J.-H."/>
            <person name="Kim S.-Y."/>
            <person name="Kim J."/>
            <person name="Cha S."/>
            <person name="Kim S.-Y."/>
            <person name="Darby A.C."/>
            <person name="Fuxelius H.-H."/>
            <person name="Yin J."/>
            <person name="Kim J.H."/>
            <person name="Kim J."/>
            <person name="Lee S.J."/>
            <person name="Koh Y.-S."/>
            <person name="Jang W.-J."/>
            <person name="Park K.-H."/>
            <person name="Andersson S.G.E."/>
            <person name="Choi M.-S."/>
            <person name="Kim I.-S."/>
        </authorList>
    </citation>
    <scope>NUCLEOTIDE SEQUENCE [LARGE SCALE GENOMIC DNA]</scope>
    <source>
        <strain>Boryong</strain>
    </source>
</reference>
<dbReference type="EC" id="6.1.1.7" evidence="1"/>
<dbReference type="EMBL" id="AM494475">
    <property type="protein sequence ID" value="CAM79640.1"/>
    <property type="molecule type" value="Genomic_DNA"/>
</dbReference>
<dbReference type="SMR" id="A5CD03"/>
<dbReference type="KEGG" id="ots:OTBS_0574"/>
<dbReference type="eggNOG" id="COG0013">
    <property type="taxonomic scope" value="Bacteria"/>
</dbReference>
<dbReference type="HOGENOM" id="CLU_004485_1_1_5"/>
<dbReference type="Proteomes" id="UP000001565">
    <property type="component" value="Chromosome"/>
</dbReference>
<dbReference type="GO" id="GO:0005829">
    <property type="term" value="C:cytosol"/>
    <property type="evidence" value="ECO:0007669"/>
    <property type="project" value="TreeGrafter"/>
</dbReference>
<dbReference type="GO" id="GO:0004813">
    <property type="term" value="F:alanine-tRNA ligase activity"/>
    <property type="evidence" value="ECO:0007669"/>
    <property type="project" value="UniProtKB-UniRule"/>
</dbReference>
<dbReference type="GO" id="GO:0002161">
    <property type="term" value="F:aminoacyl-tRNA deacylase activity"/>
    <property type="evidence" value="ECO:0007669"/>
    <property type="project" value="TreeGrafter"/>
</dbReference>
<dbReference type="GO" id="GO:0005524">
    <property type="term" value="F:ATP binding"/>
    <property type="evidence" value="ECO:0007669"/>
    <property type="project" value="UniProtKB-UniRule"/>
</dbReference>
<dbReference type="GO" id="GO:0000049">
    <property type="term" value="F:tRNA binding"/>
    <property type="evidence" value="ECO:0007669"/>
    <property type="project" value="UniProtKB-KW"/>
</dbReference>
<dbReference type="GO" id="GO:0008270">
    <property type="term" value="F:zinc ion binding"/>
    <property type="evidence" value="ECO:0007669"/>
    <property type="project" value="UniProtKB-UniRule"/>
</dbReference>
<dbReference type="GO" id="GO:0006419">
    <property type="term" value="P:alanyl-tRNA aminoacylation"/>
    <property type="evidence" value="ECO:0007669"/>
    <property type="project" value="UniProtKB-UniRule"/>
</dbReference>
<dbReference type="GO" id="GO:0045892">
    <property type="term" value="P:negative regulation of DNA-templated transcription"/>
    <property type="evidence" value="ECO:0007669"/>
    <property type="project" value="TreeGrafter"/>
</dbReference>
<dbReference type="CDD" id="cd00673">
    <property type="entry name" value="AlaRS_core"/>
    <property type="match status" value="1"/>
</dbReference>
<dbReference type="FunFam" id="3.10.310.40:FF:000001">
    <property type="entry name" value="Alanine--tRNA ligase"/>
    <property type="match status" value="1"/>
</dbReference>
<dbReference type="FunFam" id="3.30.930.10:FF:000004">
    <property type="entry name" value="Alanine--tRNA ligase"/>
    <property type="match status" value="1"/>
</dbReference>
<dbReference type="FunFam" id="3.30.980.10:FF:000004">
    <property type="entry name" value="Alanine--tRNA ligase, cytoplasmic"/>
    <property type="match status" value="1"/>
</dbReference>
<dbReference type="Gene3D" id="2.40.30.130">
    <property type="match status" value="1"/>
</dbReference>
<dbReference type="Gene3D" id="3.10.310.40">
    <property type="match status" value="1"/>
</dbReference>
<dbReference type="Gene3D" id="3.30.54.20">
    <property type="match status" value="1"/>
</dbReference>
<dbReference type="Gene3D" id="3.30.930.10">
    <property type="entry name" value="Bira Bifunctional Protein, Domain 2"/>
    <property type="match status" value="1"/>
</dbReference>
<dbReference type="Gene3D" id="3.30.980.10">
    <property type="entry name" value="Threonyl-trna Synthetase, Chain A, domain 2"/>
    <property type="match status" value="1"/>
</dbReference>
<dbReference type="HAMAP" id="MF_00036_B">
    <property type="entry name" value="Ala_tRNA_synth_B"/>
    <property type="match status" value="1"/>
</dbReference>
<dbReference type="InterPro" id="IPR045864">
    <property type="entry name" value="aa-tRNA-synth_II/BPL/LPL"/>
</dbReference>
<dbReference type="InterPro" id="IPR002318">
    <property type="entry name" value="Ala-tRNA-lgiase_IIc"/>
</dbReference>
<dbReference type="InterPro" id="IPR018162">
    <property type="entry name" value="Ala-tRNA-ligase_IIc_anticod-bd"/>
</dbReference>
<dbReference type="InterPro" id="IPR018165">
    <property type="entry name" value="Ala-tRNA-synth_IIc_core"/>
</dbReference>
<dbReference type="InterPro" id="IPR018164">
    <property type="entry name" value="Ala-tRNA-synth_IIc_N"/>
</dbReference>
<dbReference type="InterPro" id="IPR050058">
    <property type="entry name" value="Ala-tRNA_ligase"/>
</dbReference>
<dbReference type="InterPro" id="IPR023033">
    <property type="entry name" value="Ala_tRNA_ligase_euk/bac"/>
</dbReference>
<dbReference type="InterPro" id="IPR003156">
    <property type="entry name" value="DHHA1_dom"/>
</dbReference>
<dbReference type="InterPro" id="IPR018163">
    <property type="entry name" value="Thr/Ala-tRNA-synth_IIc_edit"/>
</dbReference>
<dbReference type="InterPro" id="IPR009000">
    <property type="entry name" value="Transl_B-barrel_sf"/>
</dbReference>
<dbReference type="InterPro" id="IPR012947">
    <property type="entry name" value="tRNA_SAD"/>
</dbReference>
<dbReference type="NCBIfam" id="TIGR00344">
    <property type="entry name" value="alaS"/>
    <property type="match status" value="1"/>
</dbReference>
<dbReference type="PANTHER" id="PTHR11777:SF9">
    <property type="entry name" value="ALANINE--TRNA LIGASE, CYTOPLASMIC"/>
    <property type="match status" value="1"/>
</dbReference>
<dbReference type="PANTHER" id="PTHR11777">
    <property type="entry name" value="ALANYL-TRNA SYNTHETASE"/>
    <property type="match status" value="1"/>
</dbReference>
<dbReference type="Pfam" id="PF02272">
    <property type="entry name" value="DHHA1"/>
    <property type="match status" value="1"/>
</dbReference>
<dbReference type="Pfam" id="PF01411">
    <property type="entry name" value="tRNA-synt_2c"/>
    <property type="match status" value="1"/>
</dbReference>
<dbReference type="Pfam" id="PF07973">
    <property type="entry name" value="tRNA_SAD"/>
    <property type="match status" value="1"/>
</dbReference>
<dbReference type="PRINTS" id="PR00980">
    <property type="entry name" value="TRNASYNTHALA"/>
</dbReference>
<dbReference type="SMART" id="SM00863">
    <property type="entry name" value="tRNA_SAD"/>
    <property type="match status" value="1"/>
</dbReference>
<dbReference type="SUPFAM" id="SSF55681">
    <property type="entry name" value="Class II aaRS and biotin synthetases"/>
    <property type="match status" value="1"/>
</dbReference>
<dbReference type="SUPFAM" id="SSF101353">
    <property type="entry name" value="Putative anticodon-binding domain of alanyl-tRNA synthetase (AlaRS)"/>
    <property type="match status" value="1"/>
</dbReference>
<dbReference type="SUPFAM" id="SSF55186">
    <property type="entry name" value="ThrRS/AlaRS common domain"/>
    <property type="match status" value="1"/>
</dbReference>
<dbReference type="SUPFAM" id="SSF50447">
    <property type="entry name" value="Translation proteins"/>
    <property type="match status" value="1"/>
</dbReference>
<dbReference type="PROSITE" id="PS50860">
    <property type="entry name" value="AA_TRNA_LIGASE_II_ALA"/>
    <property type="match status" value="1"/>
</dbReference>
<proteinExistence type="inferred from homology"/>
<comment type="function">
    <text evidence="1">Catalyzes the attachment of alanine to tRNA(Ala) in a two-step reaction: alanine is first activated by ATP to form Ala-AMP and then transferred to the acceptor end of tRNA(Ala). Also edits incorrectly charged Ser-tRNA(Ala) and Gly-tRNA(Ala) via its editing domain.</text>
</comment>
<comment type="catalytic activity">
    <reaction evidence="1">
        <text>tRNA(Ala) + L-alanine + ATP = L-alanyl-tRNA(Ala) + AMP + diphosphate</text>
        <dbReference type="Rhea" id="RHEA:12540"/>
        <dbReference type="Rhea" id="RHEA-COMP:9657"/>
        <dbReference type="Rhea" id="RHEA-COMP:9923"/>
        <dbReference type="ChEBI" id="CHEBI:30616"/>
        <dbReference type="ChEBI" id="CHEBI:33019"/>
        <dbReference type="ChEBI" id="CHEBI:57972"/>
        <dbReference type="ChEBI" id="CHEBI:78442"/>
        <dbReference type="ChEBI" id="CHEBI:78497"/>
        <dbReference type="ChEBI" id="CHEBI:456215"/>
        <dbReference type="EC" id="6.1.1.7"/>
    </reaction>
</comment>
<comment type="cofactor">
    <cofactor evidence="1">
        <name>Zn(2+)</name>
        <dbReference type="ChEBI" id="CHEBI:29105"/>
    </cofactor>
    <text evidence="1">Binds 1 zinc ion per subunit.</text>
</comment>
<comment type="subcellular location">
    <subcellularLocation>
        <location evidence="1">Cytoplasm</location>
    </subcellularLocation>
</comment>
<comment type="domain">
    <text evidence="1">Consists of three domains; the N-terminal catalytic domain, the editing domain and the C-terminal C-Ala domain. The editing domain removes incorrectly charged amino acids, while the C-Ala domain, along with tRNA(Ala), serves as a bridge to cooperatively bring together the editing and aminoacylation centers thus stimulating deacylation of misacylated tRNAs.</text>
</comment>
<comment type="similarity">
    <text evidence="1">Belongs to the class-II aminoacyl-tRNA synthetase family.</text>
</comment>
<feature type="chain" id="PRO_0000347709" description="Alanine--tRNA ligase">
    <location>
        <begin position="1"/>
        <end position="891"/>
    </location>
</feature>
<feature type="binding site" evidence="1">
    <location>
        <position position="576"/>
    </location>
    <ligand>
        <name>Zn(2+)</name>
        <dbReference type="ChEBI" id="CHEBI:29105"/>
    </ligand>
</feature>
<feature type="binding site" evidence="1">
    <location>
        <position position="580"/>
    </location>
    <ligand>
        <name>Zn(2+)</name>
        <dbReference type="ChEBI" id="CHEBI:29105"/>
    </ligand>
</feature>
<feature type="binding site" evidence="1">
    <location>
        <position position="684"/>
    </location>
    <ligand>
        <name>Zn(2+)</name>
        <dbReference type="ChEBI" id="CHEBI:29105"/>
    </ligand>
</feature>
<feature type="binding site" evidence="1">
    <location>
        <position position="688"/>
    </location>
    <ligand>
        <name>Zn(2+)</name>
        <dbReference type="ChEBI" id="CHEBI:29105"/>
    </ligand>
</feature>
<accession>A5CD03</accession>
<evidence type="ECO:0000255" key="1">
    <source>
        <dbReference type="HAMAP-Rule" id="MF_00036"/>
    </source>
</evidence>
<organism>
    <name type="scientific">Orientia tsutsugamushi (strain Boryong)</name>
    <name type="common">Rickettsia tsutsugamushi</name>
    <dbReference type="NCBI Taxonomy" id="357244"/>
    <lineage>
        <taxon>Bacteria</taxon>
        <taxon>Pseudomonadati</taxon>
        <taxon>Pseudomonadota</taxon>
        <taxon>Alphaproteobacteria</taxon>
        <taxon>Rickettsiales</taxon>
        <taxon>Rickettsiaceae</taxon>
        <taxon>Rickettsieae</taxon>
        <taxon>Orientia</taxon>
    </lineage>
</organism>
<protein>
    <recommendedName>
        <fullName evidence="1">Alanine--tRNA ligase</fullName>
        <ecNumber evidence="1">6.1.1.7</ecNumber>
    </recommendedName>
    <alternativeName>
        <fullName evidence="1">Alanyl-tRNA synthetase</fullName>
        <shortName evidence="1">AlaRS</shortName>
    </alternativeName>
</protein>
<gene>
    <name evidence="1" type="primary">alaS</name>
    <name type="ordered locus">OTBS_0574</name>
</gene>